<dbReference type="EMBL" id="Z74295">
    <property type="protein sequence ID" value="CAA98827.1"/>
    <property type="molecule type" value="Genomic_DNA"/>
</dbReference>
<dbReference type="EMBL" id="BK006938">
    <property type="protein sequence ID" value="DAA11620.1"/>
    <property type="molecule type" value="Genomic_DNA"/>
</dbReference>
<dbReference type="PIR" id="S67812">
    <property type="entry name" value="S67812"/>
</dbReference>
<dbReference type="RefSeq" id="NP_010034.1">
    <property type="nucleotide sequence ID" value="NM_001180307.1"/>
</dbReference>
<dbReference type="SMR" id="P0CD99"/>
<dbReference type="BioGRID" id="31865">
    <property type="interactions" value="3"/>
</dbReference>
<dbReference type="DIP" id="DIP-5180N"/>
<dbReference type="FunCoup" id="P0CD99">
    <property type="interactions" value="67"/>
</dbReference>
<dbReference type="STRING" id="4932.YDL247W"/>
<dbReference type="PaxDb" id="4932-YDL247W"/>
<dbReference type="EnsemblFungi" id="YDL247W_mRNA">
    <property type="protein sequence ID" value="YDL247W"/>
    <property type="gene ID" value="YDL247W"/>
</dbReference>
<dbReference type="GeneID" id="851350"/>
<dbReference type="KEGG" id="sce:YDL247W"/>
<dbReference type="AGR" id="SGD:S000002406"/>
<dbReference type="SGD" id="S000002406">
    <property type="gene designation" value="MPH2"/>
</dbReference>
<dbReference type="VEuPathDB" id="FungiDB:YDL247W"/>
<dbReference type="eggNOG" id="KOG0254">
    <property type="taxonomic scope" value="Eukaryota"/>
</dbReference>
<dbReference type="GeneTree" id="ENSGT00940000176341"/>
<dbReference type="HOGENOM" id="CLU_001265_11_5_1"/>
<dbReference type="InParanoid" id="P0CD99"/>
<dbReference type="OMA" id="SMIHETN"/>
<dbReference type="OrthoDB" id="6612291at2759"/>
<dbReference type="BioCyc" id="YEAST:G3O-29622-MONOMER"/>
<dbReference type="PRO" id="PR:P0CD99"/>
<dbReference type="Proteomes" id="UP000002311">
    <property type="component" value="Chromosome IV"/>
</dbReference>
<dbReference type="RNAct" id="P0CD99">
    <property type="molecule type" value="protein"/>
</dbReference>
<dbReference type="GO" id="GO:0071944">
    <property type="term" value="C:cell periphery"/>
    <property type="evidence" value="ECO:0007005"/>
    <property type="project" value="SGD"/>
</dbReference>
<dbReference type="GO" id="GO:0016020">
    <property type="term" value="C:membrane"/>
    <property type="evidence" value="ECO:0000318"/>
    <property type="project" value="GO_Central"/>
</dbReference>
<dbReference type="GO" id="GO:0005886">
    <property type="term" value="C:plasma membrane"/>
    <property type="evidence" value="ECO:0007669"/>
    <property type="project" value="UniProtKB-SubCell"/>
</dbReference>
<dbReference type="GO" id="GO:0015151">
    <property type="term" value="F:alpha-glucoside transmembrane transporter activity"/>
    <property type="evidence" value="ECO:0000314"/>
    <property type="project" value="UniProtKB"/>
</dbReference>
<dbReference type="GO" id="GO:0005351">
    <property type="term" value="F:carbohydrate:proton symporter activity"/>
    <property type="evidence" value="ECO:0000318"/>
    <property type="project" value="GO_Central"/>
</dbReference>
<dbReference type="GO" id="GO:0005363">
    <property type="term" value="F:maltose transmembrane transporter activity"/>
    <property type="evidence" value="ECO:0000314"/>
    <property type="project" value="SGD"/>
</dbReference>
<dbReference type="GO" id="GO:0000017">
    <property type="term" value="P:alpha-glucoside transport"/>
    <property type="evidence" value="ECO:0000314"/>
    <property type="project" value="UniProtKB"/>
</dbReference>
<dbReference type="GO" id="GO:0008643">
    <property type="term" value="P:carbohydrate transport"/>
    <property type="evidence" value="ECO:0000314"/>
    <property type="project" value="SGD"/>
</dbReference>
<dbReference type="GO" id="GO:0000023">
    <property type="term" value="P:maltose metabolic process"/>
    <property type="evidence" value="ECO:0007669"/>
    <property type="project" value="UniProtKB-KW"/>
</dbReference>
<dbReference type="GO" id="GO:0055085">
    <property type="term" value="P:transmembrane transport"/>
    <property type="evidence" value="ECO:0000314"/>
    <property type="project" value="SGD"/>
</dbReference>
<dbReference type="FunFam" id="1.20.1250.20:FF:000254">
    <property type="entry name" value="MAL31p Maltose permease"/>
    <property type="match status" value="1"/>
</dbReference>
<dbReference type="Gene3D" id="1.20.1250.20">
    <property type="entry name" value="MFS general substrate transporter like domains"/>
    <property type="match status" value="1"/>
</dbReference>
<dbReference type="InterPro" id="IPR020846">
    <property type="entry name" value="MFS_dom"/>
</dbReference>
<dbReference type="InterPro" id="IPR005828">
    <property type="entry name" value="MFS_sugar_transport-like"/>
</dbReference>
<dbReference type="InterPro" id="IPR050360">
    <property type="entry name" value="MFS_Sugar_Transporters"/>
</dbReference>
<dbReference type="InterPro" id="IPR036259">
    <property type="entry name" value="MFS_trans_sf"/>
</dbReference>
<dbReference type="InterPro" id="IPR003663">
    <property type="entry name" value="Sugar/inositol_transpt"/>
</dbReference>
<dbReference type="InterPro" id="IPR005829">
    <property type="entry name" value="Sugar_transporter_CS"/>
</dbReference>
<dbReference type="NCBIfam" id="TIGR00879">
    <property type="entry name" value="SP"/>
    <property type="match status" value="1"/>
</dbReference>
<dbReference type="PANTHER" id="PTHR48022:SF5">
    <property type="entry name" value="ALPHA-GLUCOSIDES PERMEASE MPH2-RELATED"/>
    <property type="match status" value="1"/>
</dbReference>
<dbReference type="PANTHER" id="PTHR48022">
    <property type="entry name" value="PLASTIDIC GLUCOSE TRANSPORTER 4"/>
    <property type="match status" value="1"/>
</dbReference>
<dbReference type="Pfam" id="PF00083">
    <property type="entry name" value="Sugar_tr"/>
    <property type="match status" value="1"/>
</dbReference>
<dbReference type="SUPFAM" id="SSF103473">
    <property type="entry name" value="MFS general substrate transporter"/>
    <property type="match status" value="1"/>
</dbReference>
<dbReference type="PROSITE" id="PS50850">
    <property type="entry name" value="MFS"/>
    <property type="match status" value="1"/>
</dbReference>
<dbReference type="PROSITE" id="PS00217">
    <property type="entry name" value="SUGAR_TRANSPORT_2"/>
    <property type="match status" value="1"/>
</dbReference>
<organism>
    <name type="scientific">Saccharomyces cerevisiae (strain ATCC 204508 / S288c)</name>
    <name type="common">Baker's yeast</name>
    <dbReference type="NCBI Taxonomy" id="559292"/>
    <lineage>
        <taxon>Eukaryota</taxon>
        <taxon>Fungi</taxon>
        <taxon>Dikarya</taxon>
        <taxon>Ascomycota</taxon>
        <taxon>Saccharomycotina</taxon>
        <taxon>Saccharomycetes</taxon>
        <taxon>Saccharomycetales</taxon>
        <taxon>Saccharomycetaceae</taxon>
        <taxon>Saccharomyces</taxon>
    </lineage>
</organism>
<proteinExistence type="evidence at transcript level"/>
<gene>
    <name type="primary">MPH2</name>
    <name type="ordered locus">YDL247W</name>
</gene>
<name>MPH2_YEAST</name>
<sequence length="609" mass="68189">MKNLSFLINRRKENTSDSNVYPGKAKSHEPSWIEMDDQTKKDGLDIVHVEFSPDTRAPSDSNKVITEIFDATEDAKEADESERGMPLATALNTYPKAAAWSLLVSTTLIMEGYDTAILGAFYALPIFQRKFGSQNDKTGEWEISASWQIGLTLCYMAGEIVGLQLTGPSVDLVGNRYTLIIALFFLAAFTFILYFCNSLGMIAVGQALCGMPWGCFQCLTVSYASEICPLALRYYLTTYSNLCWLFGQLFAAGIMKNSQKKYADSELGYKLPFALQWILPVPLALGIFFAPESPWWLVKKGRFDEARRSLRRTLSGKGPEKEILVTLEVDKIKVTIDKEKRLTSKEGSYSDCFEDKINRRRTRITCLCWAGQATCGSILIGYSTYFYEKAGVSTEMSFTFSIIQYCLGICATFLSWWASKYFGRYDLYAFGLAFQTIVFFIIGGLGCSSTHGSKMGSGSLLMAVAFFYNLGIAPVVFCLVSEMPSSRLRTKTIILARNTYNVVSIICSVLILYQLNSKKWNWGAKSGFFWGVLCFCTLIWAVVDLPETAGKTFVEINELFKLGVSARKFKSTKVDPFVVKTPLKTSLITTPREISKLPLQRNSNVSHHL</sequence>
<reference key="1">
    <citation type="journal article" date="1997" name="Nature">
        <title>The nucleotide sequence of Saccharomyces cerevisiae chromosome IV.</title>
        <authorList>
            <person name="Jacq C."/>
            <person name="Alt-Moerbe J."/>
            <person name="Andre B."/>
            <person name="Arnold W."/>
            <person name="Bahr A."/>
            <person name="Ballesta J.P.G."/>
            <person name="Bargues M."/>
            <person name="Baron L."/>
            <person name="Becker A."/>
            <person name="Biteau N."/>
            <person name="Bloecker H."/>
            <person name="Blugeon C."/>
            <person name="Boskovic J."/>
            <person name="Brandt P."/>
            <person name="Brueckner M."/>
            <person name="Buitrago M.J."/>
            <person name="Coster F."/>
            <person name="Delaveau T."/>
            <person name="del Rey F."/>
            <person name="Dujon B."/>
            <person name="Eide L.G."/>
            <person name="Garcia-Cantalejo J.M."/>
            <person name="Goffeau A."/>
            <person name="Gomez-Peris A."/>
            <person name="Granotier C."/>
            <person name="Hanemann V."/>
            <person name="Hankeln T."/>
            <person name="Hoheisel J.D."/>
            <person name="Jaeger W."/>
            <person name="Jimenez A."/>
            <person name="Jonniaux J.-L."/>
            <person name="Kraemer C."/>
            <person name="Kuester H."/>
            <person name="Laamanen P."/>
            <person name="Legros Y."/>
            <person name="Louis E.J."/>
            <person name="Moeller-Rieker S."/>
            <person name="Monnet A."/>
            <person name="Moro M."/>
            <person name="Mueller-Auer S."/>
            <person name="Nussbaumer B."/>
            <person name="Paricio N."/>
            <person name="Paulin L."/>
            <person name="Perea J."/>
            <person name="Perez-Alonso M."/>
            <person name="Perez-Ortin J.E."/>
            <person name="Pohl T.M."/>
            <person name="Prydz H."/>
            <person name="Purnelle B."/>
            <person name="Rasmussen S.W."/>
            <person name="Remacha M.A."/>
            <person name="Revuelta J.L."/>
            <person name="Rieger M."/>
            <person name="Salom D."/>
            <person name="Saluz H.P."/>
            <person name="Saiz J.E."/>
            <person name="Saren A.-M."/>
            <person name="Schaefer M."/>
            <person name="Scharfe M."/>
            <person name="Schmidt E.R."/>
            <person name="Schneider C."/>
            <person name="Scholler P."/>
            <person name="Schwarz S."/>
            <person name="Soler-Mira A."/>
            <person name="Urrestarazu L.A."/>
            <person name="Verhasselt P."/>
            <person name="Vissers S."/>
            <person name="Voet M."/>
            <person name="Volckaert G."/>
            <person name="Wagner G."/>
            <person name="Wambutt R."/>
            <person name="Wedler E."/>
            <person name="Wedler H."/>
            <person name="Woelfl S."/>
            <person name="Harris D.E."/>
            <person name="Bowman S."/>
            <person name="Brown D."/>
            <person name="Churcher C.M."/>
            <person name="Connor R."/>
            <person name="Dedman K."/>
            <person name="Gentles S."/>
            <person name="Hamlin N."/>
            <person name="Hunt S."/>
            <person name="Jones L."/>
            <person name="McDonald S."/>
            <person name="Murphy L.D."/>
            <person name="Niblett D."/>
            <person name="Odell C."/>
            <person name="Oliver K."/>
            <person name="Rajandream M.A."/>
            <person name="Richards C."/>
            <person name="Shore L."/>
            <person name="Walsh S.V."/>
            <person name="Barrell B.G."/>
            <person name="Dietrich F.S."/>
            <person name="Mulligan J.T."/>
            <person name="Allen E."/>
            <person name="Araujo R."/>
            <person name="Aviles E."/>
            <person name="Berno A."/>
            <person name="Carpenter J."/>
            <person name="Chen E."/>
            <person name="Cherry J.M."/>
            <person name="Chung E."/>
            <person name="Duncan M."/>
            <person name="Hunicke-Smith S."/>
            <person name="Hyman R.W."/>
            <person name="Komp C."/>
            <person name="Lashkari D."/>
            <person name="Lew H."/>
            <person name="Lin D."/>
            <person name="Mosedale D."/>
            <person name="Nakahara K."/>
            <person name="Namath A."/>
            <person name="Oefner P."/>
            <person name="Oh C."/>
            <person name="Petel F.X."/>
            <person name="Roberts D."/>
            <person name="Schramm S."/>
            <person name="Schroeder M."/>
            <person name="Shogren T."/>
            <person name="Shroff N."/>
            <person name="Winant A."/>
            <person name="Yelton M.A."/>
            <person name="Botstein D."/>
            <person name="Davis R.W."/>
            <person name="Johnston M."/>
            <person name="Andrews S."/>
            <person name="Brinkman R."/>
            <person name="Cooper J."/>
            <person name="Ding H."/>
            <person name="Du Z."/>
            <person name="Favello A."/>
            <person name="Fulton L."/>
            <person name="Gattung S."/>
            <person name="Greco T."/>
            <person name="Hallsworth K."/>
            <person name="Hawkins J."/>
            <person name="Hillier L.W."/>
            <person name="Jier M."/>
            <person name="Johnson D."/>
            <person name="Johnston L."/>
            <person name="Kirsten J."/>
            <person name="Kucaba T."/>
            <person name="Langston Y."/>
            <person name="Latreille P."/>
            <person name="Le T."/>
            <person name="Mardis E."/>
            <person name="Menezes S."/>
            <person name="Miller N."/>
            <person name="Nhan M."/>
            <person name="Pauley A."/>
            <person name="Peluso D."/>
            <person name="Rifkin L."/>
            <person name="Riles L."/>
            <person name="Taich A."/>
            <person name="Trevaskis E."/>
            <person name="Vignati D."/>
            <person name="Wilcox L."/>
            <person name="Wohldman P."/>
            <person name="Vaudin M."/>
            <person name="Wilson R."/>
            <person name="Waterston R."/>
            <person name="Albermann K."/>
            <person name="Hani J."/>
            <person name="Heumann K."/>
            <person name="Kleine K."/>
            <person name="Mewes H.-W."/>
            <person name="Zollner A."/>
            <person name="Zaccaria P."/>
        </authorList>
    </citation>
    <scope>NUCLEOTIDE SEQUENCE [LARGE SCALE GENOMIC DNA]</scope>
    <source>
        <strain>ATCC 204508 / S288c</strain>
    </source>
</reference>
<reference key="2">
    <citation type="journal article" date="2014" name="G3 (Bethesda)">
        <title>The reference genome sequence of Saccharomyces cerevisiae: Then and now.</title>
        <authorList>
            <person name="Engel S.R."/>
            <person name="Dietrich F.S."/>
            <person name="Fisk D.G."/>
            <person name="Binkley G."/>
            <person name="Balakrishnan R."/>
            <person name="Costanzo M.C."/>
            <person name="Dwight S.S."/>
            <person name="Hitz B.C."/>
            <person name="Karra K."/>
            <person name="Nash R.S."/>
            <person name="Weng S."/>
            <person name="Wong E.D."/>
            <person name="Lloyd P."/>
            <person name="Skrzypek M.S."/>
            <person name="Miyasato S.R."/>
            <person name="Simison M."/>
            <person name="Cherry J.M."/>
        </authorList>
    </citation>
    <scope>GENOME REANNOTATION</scope>
    <source>
        <strain>ATCC 204508 / S288c</strain>
    </source>
</reference>
<reference key="3">
    <citation type="journal article" date="1999" name="FEBS Lett.">
        <title>Concurrent knock-out of at least 20 transporter genes is required to block uptake of hexoses in Saccharomyces cerevisiae.</title>
        <authorList>
            <person name="Wieczorke R."/>
            <person name="Krampe S."/>
            <person name="Weierstall T."/>
            <person name="Freidel K."/>
            <person name="Hollenberg C.P."/>
            <person name="Boles E."/>
        </authorList>
    </citation>
    <scope>FUNCTION</scope>
</reference>
<reference key="4">
    <citation type="journal article" date="2002" name="Yeast">
        <title>Characterization of the putative maltose transporters encoded by YDL247w and YJR160c.</title>
        <authorList>
            <person name="Day R.E."/>
            <person name="Higgins V.J."/>
            <person name="Rogers P.J."/>
            <person name="Dawes I.W."/>
        </authorList>
    </citation>
    <scope>FUNCTION</scope>
    <scope>INDUCTION</scope>
</reference>
<accession>P0CD99</accession>
<accession>D6VRB0</accession>
<accession>P47186</accession>
<accession>Q07787</accession>
<protein>
    <recommendedName>
        <fullName>Alpha-glucosides permease MPH2</fullName>
    </recommendedName>
    <alternativeName>
        <fullName>Maltose transport protein 2</fullName>
    </alternativeName>
</protein>
<comment type="function">
    <text evidence="3 4">High-affinity uptake of maltose and maltotriose. Also transports alpha-methylglucoside, glucose and turanose but not melezitose or trehalose.</text>
</comment>
<comment type="subcellular location">
    <subcellularLocation>
        <location evidence="1">Cell membrane</location>
        <topology>Multi-pass membrane protein</topology>
    </subcellularLocation>
</comment>
<comment type="induction">
    <text evidence="4">By maltose and maltotriose. Repressed by glucose.</text>
</comment>
<comment type="similarity">
    <text evidence="5">Belongs to the major facilitator superfamily. Sugar transporter (TC 2.A.1.1) family.</text>
</comment>
<evidence type="ECO:0000250" key="1"/>
<evidence type="ECO:0000255" key="2"/>
<evidence type="ECO:0000269" key="3">
    <source>
    </source>
</evidence>
<evidence type="ECO:0000269" key="4">
    <source>
    </source>
</evidence>
<evidence type="ECO:0000305" key="5"/>
<keyword id="KW-1003">Cell membrane</keyword>
<keyword id="KW-0462">Maltose metabolism</keyword>
<keyword id="KW-0472">Membrane</keyword>
<keyword id="KW-1185">Reference proteome</keyword>
<keyword id="KW-0762">Sugar transport</keyword>
<keyword id="KW-0812">Transmembrane</keyword>
<keyword id="KW-1133">Transmembrane helix</keyword>
<keyword id="KW-0813">Transport</keyword>
<feature type="chain" id="PRO_0000050424" description="Alpha-glucosides permease MPH2">
    <location>
        <begin position="1"/>
        <end position="609"/>
    </location>
</feature>
<feature type="topological domain" description="Cytoplasmic" evidence="1">
    <location>
        <begin position="1"/>
        <end position="106"/>
    </location>
</feature>
<feature type="transmembrane region" description="Helical; Name=1" evidence="2">
    <location>
        <begin position="107"/>
        <end position="127"/>
    </location>
</feature>
<feature type="topological domain" description="Extracellular" evidence="1">
    <location>
        <begin position="128"/>
        <end position="142"/>
    </location>
</feature>
<feature type="transmembrane region" description="Helical; Name=2" evidence="2">
    <location>
        <begin position="143"/>
        <end position="163"/>
    </location>
</feature>
<feature type="topological domain" description="Cytoplasmic" evidence="1">
    <location>
        <begin position="164"/>
        <end position="178"/>
    </location>
</feature>
<feature type="transmembrane region" description="Helical; Name=3" evidence="2">
    <location>
        <begin position="179"/>
        <end position="199"/>
    </location>
</feature>
<feature type="topological domain" description="Extracellular" evidence="1">
    <location>
        <position position="200"/>
    </location>
</feature>
<feature type="transmembrane region" description="Helical; Name=4" evidence="2">
    <location>
        <begin position="201"/>
        <end position="221"/>
    </location>
</feature>
<feature type="topological domain" description="Cytoplasmic" evidence="1">
    <location>
        <begin position="222"/>
        <end position="234"/>
    </location>
</feature>
<feature type="transmembrane region" description="Helical; Name=5" evidence="2">
    <location>
        <begin position="235"/>
        <end position="255"/>
    </location>
</feature>
<feature type="topological domain" description="Extracellular" evidence="1">
    <location>
        <begin position="256"/>
        <end position="270"/>
    </location>
</feature>
<feature type="transmembrane region" description="Helical; Name=6" evidence="2">
    <location>
        <begin position="271"/>
        <end position="291"/>
    </location>
</feature>
<feature type="topological domain" description="Cytoplasmic" evidence="1">
    <location>
        <begin position="292"/>
        <end position="363"/>
    </location>
</feature>
<feature type="transmembrane region" description="Helical; Name=7" evidence="2">
    <location>
        <begin position="364"/>
        <end position="384"/>
    </location>
</feature>
<feature type="topological domain" description="Extracellular" evidence="1">
    <location>
        <begin position="385"/>
        <end position="397"/>
    </location>
</feature>
<feature type="transmembrane region" description="Helical; Name=8" evidence="2">
    <location>
        <begin position="398"/>
        <end position="418"/>
    </location>
</feature>
<feature type="topological domain" description="Cytoplasmic" evidence="1">
    <location>
        <begin position="419"/>
        <end position="426"/>
    </location>
</feature>
<feature type="transmembrane region" description="Helical; Name=9" evidence="2">
    <location>
        <begin position="427"/>
        <end position="447"/>
    </location>
</feature>
<feature type="topological domain" description="Extracellular" evidence="1">
    <location>
        <begin position="448"/>
        <end position="459"/>
    </location>
</feature>
<feature type="transmembrane region" description="Helical; Name=10" evidence="2">
    <location>
        <begin position="460"/>
        <end position="480"/>
    </location>
</feature>
<feature type="topological domain" description="Cytoplasmic" evidence="1">
    <location>
        <begin position="481"/>
        <end position="492"/>
    </location>
</feature>
<feature type="transmembrane region" description="Helical; Name=11" evidence="2">
    <location>
        <begin position="493"/>
        <end position="513"/>
    </location>
</feature>
<feature type="topological domain" description="Extracellular" evidence="1">
    <location>
        <begin position="514"/>
        <end position="525"/>
    </location>
</feature>
<feature type="transmembrane region" description="Helical; Name=12" evidence="2">
    <location>
        <begin position="526"/>
        <end position="546"/>
    </location>
</feature>
<feature type="topological domain" description="Cytoplasmic" evidence="1">
    <location>
        <begin position="547"/>
        <end position="609"/>
    </location>
</feature>